<name>CLPA_ECOL6</name>
<feature type="chain" id="PRO_0000191081" description="ATP-dependent Clp protease ATP-binding subunit ClpA">
    <location>
        <begin position="1"/>
        <end position="758"/>
    </location>
</feature>
<feature type="domain" description="Clp R" evidence="3">
    <location>
        <begin position="1"/>
        <end position="145"/>
    </location>
</feature>
<feature type="region of interest" description="Repeat 1" evidence="3">
    <location>
        <begin position="2"/>
        <end position="65"/>
    </location>
</feature>
<feature type="region of interest" description="Repeat 2" evidence="3">
    <location>
        <begin position="80"/>
        <end position="145"/>
    </location>
</feature>
<feature type="region of interest" description="Disordered" evidence="4">
    <location>
        <begin position="140"/>
        <end position="167"/>
    </location>
</feature>
<feature type="region of interest" description="I">
    <location>
        <begin position="169"/>
        <end position="417"/>
    </location>
</feature>
<feature type="region of interest" description="II">
    <location>
        <begin position="421"/>
        <end position="609"/>
    </location>
</feature>
<feature type="compositionally biased region" description="Polar residues" evidence="4">
    <location>
        <begin position="148"/>
        <end position="161"/>
    </location>
</feature>
<feature type="binding site" evidence="2">
    <location>
        <begin position="214"/>
        <end position="221"/>
    </location>
    <ligand>
        <name>ATP</name>
        <dbReference type="ChEBI" id="CHEBI:30616"/>
    </ligand>
</feature>
<feature type="binding site" evidence="2">
    <location>
        <begin position="495"/>
        <end position="502"/>
    </location>
    <ligand>
        <name>ATP</name>
        <dbReference type="ChEBI" id="CHEBI:30616"/>
    </ligand>
</feature>
<evidence type="ECO:0000250" key="1"/>
<evidence type="ECO:0000255" key="2"/>
<evidence type="ECO:0000255" key="3">
    <source>
        <dbReference type="PROSITE-ProRule" id="PRU01251"/>
    </source>
</evidence>
<evidence type="ECO:0000256" key="4">
    <source>
        <dbReference type="SAM" id="MobiDB-lite"/>
    </source>
</evidence>
<evidence type="ECO:0000305" key="5"/>
<organism>
    <name type="scientific">Escherichia coli O6:H1 (strain CFT073 / ATCC 700928 / UPEC)</name>
    <dbReference type="NCBI Taxonomy" id="199310"/>
    <lineage>
        <taxon>Bacteria</taxon>
        <taxon>Pseudomonadati</taxon>
        <taxon>Pseudomonadota</taxon>
        <taxon>Gammaproteobacteria</taxon>
        <taxon>Enterobacterales</taxon>
        <taxon>Enterobacteriaceae</taxon>
        <taxon>Escherichia</taxon>
    </lineage>
</organism>
<comment type="function">
    <text evidence="1">ATP-dependent specificity component of the ClpAP protease. It directs the protease to specific substrates. It has unfoldase activity. The primary function of the ClpA-ClpP complex appears to be the degradation of unfolded or abnormal proteins (By similarity).</text>
</comment>
<comment type="subunit">
    <text evidence="1">Component of the ClpAP complex composed of six ClpA subunits assembled into a hexameric ring in the presence of ATP, and fourteen ClpP subunits arranged in two heptameric rings. Binds to ClpS (By similarity).</text>
</comment>
<comment type="similarity">
    <text evidence="5">Belongs to the ClpA/ClpB family.</text>
</comment>
<comment type="sequence caution" evidence="5">
    <conflict type="erroneous initiation">
        <sequence resource="EMBL-CDS" id="AAN79491"/>
    </conflict>
    <text>Extended N-terminus.</text>
</comment>
<protein>
    <recommendedName>
        <fullName>ATP-dependent Clp protease ATP-binding subunit ClpA</fullName>
    </recommendedName>
</protein>
<reference key="1">
    <citation type="journal article" date="2002" name="Proc. Natl. Acad. Sci. U.S.A.">
        <title>Extensive mosaic structure revealed by the complete genome sequence of uropathogenic Escherichia coli.</title>
        <authorList>
            <person name="Welch R.A."/>
            <person name="Burland V."/>
            <person name="Plunkett G. III"/>
            <person name="Redford P."/>
            <person name="Roesch P."/>
            <person name="Rasko D."/>
            <person name="Buckles E.L."/>
            <person name="Liou S.-R."/>
            <person name="Boutin A."/>
            <person name="Hackett J."/>
            <person name="Stroud D."/>
            <person name="Mayhew G.F."/>
            <person name="Rose D.J."/>
            <person name="Zhou S."/>
            <person name="Schwartz D.C."/>
            <person name="Perna N.T."/>
            <person name="Mobley H.L.T."/>
            <person name="Donnenberg M.S."/>
            <person name="Blattner F.R."/>
        </authorList>
    </citation>
    <scope>NUCLEOTIDE SEQUENCE [LARGE SCALE GENOMIC DNA]</scope>
    <source>
        <strain>CFT073 / ATCC 700928 / UPEC</strain>
    </source>
</reference>
<keyword id="KW-0067">ATP-binding</keyword>
<keyword id="KW-0143">Chaperone</keyword>
<keyword id="KW-0547">Nucleotide-binding</keyword>
<keyword id="KW-1185">Reference proteome</keyword>
<keyword id="KW-0677">Repeat</keyword>
<gene>
    <name type="primary">clpA</name>
    <name type="ordered locus">c1019</name>
</gene>
<dbReference type="EMBL" id="AE014075">
    <property type="protein sequence ID" value="AAN79491.1"/>
    <property type="status" value="ALT_INIT"/>
    <property type="molecule type" value="Genomic_DNA"/>
</dbReference>
<dbReference type="RefSeq" id="WP_000934041.1">
    <property type="nucleotide sequence ID" value="NZ_CP051263.1"/>
</dbReference>
<dbReference type="SMR" id="P0ABI0"/>
<dbReference type="STRING" id="199310.c1019"/>
<dbReference type="GeneID" id="93776538"/>
<dbReference type="KEGG" id="ecc:c1019"/>
<dbReference type="eggNOG" id="COG0542">
    <property type="taxonomic scope" value="Bacteria"/>
</dbReference>
<dbReference type="HOGENOM" id="CLU_005070_4_2_6"/>
<dbReference type="Proteomes" id="UP000001410">
    <property type="component" value="Chromosome"/>
</dbReference>
<dbReference type="GO" id="GO:0005737">
    <property type="term" value="C:cytoplasm"/>
    <property type="evidence" value="ECO:0007669"/>
    <property type="project" value="TreeGrafter"/>
</dbReference>
<dbReference type="GO" id="GO:0005524">
    <property type="term" value="F:ATP binding"/>
    <property type="evidence" value="ECO:0007669"/>
    <property type="project" value="UniProtKB-KW"/>
</dbReference>
<dbReference type="GO" id="GO:0016887">
    <property type="term" value="F:ATP hydrolysis activity"/>
    <property type="evidence" value="ECO:0007669"/>
    <property type="project" value="InterPro"/>
</dbReference>
<dbReference type="GO" id="GO:0034605">
    <property type="term" value="P:cellular response to heat"/>
    <property type="evidence" value="ECO:0007669"/>
    <property type="project" value="TreeGrafter"/>
</dbReference>
<dbReference type="GO" id="GO:0043335">
    <property type="term" value="P:protein unfolding"/>
    <property type="evidence" value="ECO:0007669"/>
    <property type="project" value="InterPro"/>
</dbReference>
<dbReference type="CDD" id="cd00009">
    <property type="entry name" value="AAA"/>
    <property type="match status" value="1"/>
</dbReference>
<dbReference type="CDD" id="cd19499">
    <property type="entry name" value="RecA-like_ClpB_Hsp104-like"/>
    <property type="match status" value="1"/>
</dbReference>
<dbReference type="FunFam" id="1.10.8.60:FF:000011">
    <property type="entry name" value="ATP-dependent Clp protease ATP-binding subunit"/>
    <property type="match status" value="1"/>
</dbReference>
<dbReference type="FunFam" id="1.10.1780.10:FF:000002">
    <property type="entry name" value="ATP-dependent Clp protease ATP-binding subunit ClpA"/>
    <property type="match status" value="1"/>
</dbReference>
<dbReference type="FunFam" id="3.40.50.300:FF:000271">
    <property type="entry name" value="ATP-dependent Clp protease ATP-binding subunit ClpA"/>
    <property type="match status" value="1"/>
</dbReference>
<dbReference type="FunFam" id="3.40.50.300:FF:000268">
    <property type="entry name" value="ATP-dependent Clp protease, ATP-binding subunit ClpA"/>
    <property type="match status" value="1"/>
</dbReference>
<dbReference type="Gene3D" id="1.10.8.60">
    <property type="match status" value="2"/>
</dbReference>
<dbReference type="Gene3D" id="1.10.1780.10">
    <property type="entry name" value="Clp, N-terminal domain"/>
    <property type="match status" value="1"/>
</dbReference>
<dbReference type="Gene3D" id="3.40.50.300">
    <property type="entry name" value="P-loop containing nucleotide triphosphate hydrolases"/>
    <property type="match status" value="2"/>
</dbReference>
<dbReference type="InterPro" id="IPR003593">
    <property type="entry name" value="AAA+_ATPase"/>
</dbReference>
<dbReference type="InterPro" id="IPR003959">
    <property type="entry name" value="ATPase_AAA_core"/>
</dbReference>
<dbReference type="InterPro" id="IPR019489">
    <property type="entry name" value="Clp_ATPase_C"/>
</dbReference>
<dbReference type="InterPro" id="IPR036628">
    <property type="entry name" value="Clp_N_dom_sf"/>
</dbReference>
<dbReference type="InterPro" id="IPR004176">
    <property type="entry name" value="Clp_R_dom"/>
</dbReference>
<dbReference type="InterPro" id="IPR013461">
    <property type="entry name" value="ClpA"/>
</dbReference>
<dbReference type="InterPro" id="IPR001270">
    <property type="entry name" value="ClpA/B"/>
</dbReference>
<dbReference type="InterPro" id="IPR018368">
    <property type="entry name" value="ClpA/B_CS1"/>
</dbReference>
<dbReference type="InterPro" id="IPR028299">
    <property type="entry name" value="ClpA/B_CS2"/>
</dbReference>
<dbReference type="InterPro" id="IPR041546">
    <property type="entry name" value="ClpA/ClpB_AAA_lid"/>
</dbReference>
<dbReference type="InterPro" id="IPR050130">
    <property type="entry name" value="ClpA_ClpB"/>
</dbReference>
<dbReference type="InterPro" id="IPR027417">
    <property type="entry name" value="P-loop_NTPase"/>
</dbReference>
<dbReference type="NCBIfam" id="TIGR02639">
    <property type="entry name" value="ClpA"/>
    <property type="match status" value="1"/>
</dbReference>
<dbReference type="NCBIfam" id="NF008263">
    <property type="entry name" value="PRK11034.1"/>
    <property type="match status" value="1"/>
</dbReference>
<dbReference type="PANTHER" id="PTHR11638">
    <property type="entry name" value="ATP-DEPENDENT CLP PROTEASE"/>
    <property type="match status" value="1"/>
</dbReference>
<dbReference type="PANTHER" id="PTHR11638:SF111">
    <property type="entry name" value="ATP-DEPENDENT CLP PROTEASE ATP-BINDING SUBUNIT CLPA"/>
    <property type="match status" value="1"/>
</dbReference>
<dbReference type="Pfam" id="PF00004">
    <property type="entry name" value="AAA"/>
    <property type="match status" value="1"/>
</dbReference>
<dbReference type="Pfam" id="PF07724">
    <property type="entry name" value="AAA_2"/>
    <property type="match status" value="1"/>
</dbReference>
<dbReference type="Pfam" id="PF17871">
    <property type="entry name" value="AAA_lid_9"/>
    <property type="match status" value="1"/>
</dbReference>
<dbReference type="Pfam" id="PF02861">
    <property type="entry name" value="Clp_N"/>
    <property type="match status" value="1"/>
</dbReference>
<dbReference type="Pfam" id="PF10431">
    <property type="entry name" value="ClpB_D2-small"/>
    <property type="match status" value="1"/>
</dbReference>
<dbReference type="PRINTS" id="PR00300">
    <property type="entry name" value="CLPPROTEASEA"/>
</dbReference>
<dbReference type="SMART" id="SM00382">
    <property type="entry name" value="AAA"/>
    <property type="match status" value="2"/>
</dbReference>
<dbReference type="SMART" id="SM01086">
    <property type="entry name" value="ClpB_D2-small"/>
    <property type="match status" value="1"/>
</dbReference>
<dbReference type="SUPFAM" id="SSF81923">
    <property type="entry name" value="Double Clp-N motif"/>
    <property type="match status" value="1"/>
</dbReference>
<dbReference type="SUPFAM" id="SSF52540">
    <property type="entry name" value="P-loop containing nucleoside triphosphate hydrolases"/>
    <property type="match status" value="2"/>
</dbReference>
<dbReference type="PROSITE" id="PS51903">
    <property type="entry name" value="CLP_R"/>
    <property type="match status" value="1"/>
</dbReference>
<dbReference type="PROSITE" id="PS00870">
    <property type="entry name" value="CLPAB_1"/>
    <property type="match status" value="1"/>
</dbReference>
<dbReference type="PROSITE" id="PS00871">
    <property type="entry name" value="CLPAB_2"/>
    <property type="match status" value="1"/>
</dbReference>
<accession>P0ABI0</accession>
<accession>P15716</accession>
<accession>P77686</accession>
<sequence length="758" mass="84207">MLNQELELSLNMAFARAREHRHEFMTVEHLLLALLSNPSAREALEACSVDLVALRQELEAFIEQTTPVLPASEEERDTQPTLSFQRVLQRAVFHVQSSGRNEVTGANVLVAIFSEQESQAAYLLRKHEVSRLDVVNFISHGTRKDEPTQSSDPGSQPNSEEQAGGEERMENFTTNLNQLARVGGIDPLIGREKELERAIQVLCRRRKNNPLLVGESGVGKTAIAEGLAWRIVQGDVPEVMADCTIYSLDIGSLLAGTKYRGDFEKRFKALLKQLEQDTNSILFIDEIHTIIGAGAASGGQVDAANLIKPLLSSGKIRVIGSTTYQEFSNIFEKDRALARRFQKIDITEPSIEETVQIINGLKPKYEAHHDVRYTAKAVRAAVELAVKYINDRHLPDKAIDVIDEAGARARLMPVSKRKKTVNVADIESVVARIARIPEKSVSQSDRDTLKNLGDRLKMLVFGQDKAIEALTEAIKMARAGLGHEHKPVGSFLFAGPTGVGKTEVTVQLSKALGIELLRFDMSEYMERHTVSRLIGAPPGYVGFDQGGLLTDAVIKHPHAVLLLDEIEKAHPDVFNILLQVMDNGTLTDNNGRKADFRNVVLVMTTNAGVRETERKSIGLIHQDNSTDAMEEIKKIFTPEFRNRLDNIIWFDHLSTDVIHQVVDKFIVELQVQLDQKGVSLEVSQEARNWLAEKGYDRAMGARPMARVIQDNLKKPLANELLFGSLVDGGQVTVALDKEKNELTYGFQSAQKHKAEAAH</sequence>
<proteinExistence type="inferred from homology"/>